<comment type="function">
    <text evidence="1 2">Catalyzes the phosphorylation of ribose at O-5 in a reaction requiring ATP and magnesium. The resulting D-ribose-5-phosphate can then be used either for sythesis of nucleotides, histidine, and tryptophan, or as a component of the pentose phosphate pathway.</text>
</comment>
<comment type="catalytic activity">
    <reaction evidence="1 2">
        <text>D-ribose + ATP = D-ribose 5-phosphate + ADP + H(+)</text>
        <dbReference type="Rhea" id="RHEA:13697"/>
        <dbReference type="ChEBI" id="CHEBI:15378"/>
        <dbReference type="ChEBI" id="CHEBI:30616"/>
        <dbReference type="ChEBI" id="CHEBI:47013"/>
        <dbReference type="ChEBI" id="CHEBI:78346"/>
        <dbReference type="ChEBI" id="CHEBI:456216"/>
        <dbReference type="EC" id="2.7.1.15"/>
    </reaction>
</comment>
<comment type="cofactor">
    <cofactor evidence="1">
        <name>Mg(2+)</name>
        <dbReference type="ChEBI" id="CHEBI:18420"/>
    </cofactor>
    <text evidence="1">Requires a divalent cation, most likely magnesium in vivo, as an electrophilic catalyst to aid phosphoryl group transfer. It is the chelate of the metal and the nucleotide that is the actual substrate.</text>
</comment>
<comment type="activity regulation">
    <text evidence="1 2">Activated by a monovalent cation that binds near, but not in, the active site. The most likely occupant of the site in vivo is potassium. Ion binding induces a conformational change that may alter substrate affinity.</text>
</comment>
<comment type="biophysicochemical properties">
    <kinetics>
        <KM evidence="2">4.66 mM for ATP (in absence of K(+))</KM>
        <KM evidence="2">2.19 mM for ATP (in presence of 100 mM K(+))</KM>
    </kinetics>
</comment>
<comment type="pathway">
    <text evidence="1">Carbohydrate metabolism; D-ribose degradation; D-ribose 5-phosphate from beta-D-ribopyranose: step 2/2.</text>
</comment>
<comment type="subunit">
    <text evidence="1 2">Homodimer.</text>
</comment>
<comment type="subcellular location">
    <subcellularLocation>
        <location evidence="1">Cytoplasm</location>
    </subcellularLocation>
</comment>
<comment type="similarity">
    <text evidence="1">Belongs to the carbohydrate kinase PfkB family. Ribokinase subfamily.</text>
</comment>
<dbReference type="EC" id="2.7.1.15" evidence="1 2"/>
<dbReference type="EMBL" id="CP000046">
    <property type="protein sequence ID" value="AAW38808.1"/>
    <property type="molecule type" value="Genomic_DNA"/>
</dbReference>
<dbReference type="RefSeq" id="WP_000182751.1">
    <property type="nucleotide sequence ID" value="NZ_JBGOFO010000001.1"/>
</dbReference>
<dbReference type="PDB" id="3RY7">
    <property type="method" value="X-ray"/>
    <property type="resolution" value="2.15 A"/>
    <property type="chains" value="A=1-304"/>
</dbReference>
<dbReference type="PDBsum" id="3RY7"/>
<dbReference type="SMR" id="A0A0H2WZY4"/>
<dbReference type="KEGG" id="sac:SACOL0253"/>
<dbReference type="HOGENOM" id="CLU_027634_2_0_9"/>
<dbReference type="BRENDA" id="2.7.1.15">
    <property type="organism ID" value="3352"/>
</dbReference>
<dbReference type="UniPathway" id="UPA00916">
    <property type="reaction ID" value="UER00889"/>
</dbReference>
<dbReference type="EvolutionaryTrace" id="A0A0H2WZY4"/>
<dbReference type="Proteomes" id="UP000000530">
    <property type="component" value="Chromosome"/>
</dbReference>
<dbReference type="GO" id="GO:0005829">
    <property type="term" value="C:cytosol"/>
    <property type="evidence" value="ECO:0007669"/>
    <property type="project" value="TreeGrafter"/>
</dbReference>
<dbReference type="GO" id="GO:0005524">
    <property type="term" value="F:ATP binding"/>
    <property type="evidence" value="ECO:0007669"/>
    <property type="project" value="UniProtKB-UniRule"/>
</dbReference>
<dbReference type="GO" id="GO:0046872">
    <property type="term" value="F:metal ion binding"/>
    <property type="evidence" value="ECO:0007669"/>
    <property type="project" value="UniProtKB-KW"/>
</dbReference>
<dbReference type="GO" id="GO:0004747">
    <property type="term" value="F:ribokinase activity"/>
    <property type="evidence" value="ECO:0007669"/>
    <property type="project" value="UniProtKB-UniRule"/>
</dbReference>
<dbReference type="GO" id="GO:0019303">
    <property type="term" value="P:D-ribose catabolic process"/>
    <property type="evidence" value="ECO:0007669"/>
    <property type="project" value="UniProtKB-UniRule"/>
</dbReference>
<dbReference type="CDD" id="cd01174">
    <property type="entry name" value="ribokinase"/>
    <property type="match status" value="1"/>
</dbReference>
<dbReference type="Gene3D" id="3.40.1190.20">
    <property type="match status" value="1"/>
</dbReference>
<dbReference type="HAMAP" id="MF_01987">
    <property type="entry name" value="Ribokinase"/>
    <property type="match status" value="1"/>
</dbReference>
<dbReference type="InterPro" id="IPR002173">
    <property type="entry name" value="Carboh/pur_kinase_PfkB_CS"/>
</dbReference>
<dbReference type="InterPro" id="IPR011611">
    <property type="entry name" value="PfkB_dom"/>
</dbReference>
<dbReference type="InterPro" id="IPR002139">
    <property type="entry name" value="Ribo/fructo_kinase"/>
</dbReference>
<dbReference type="InterPro" id="IPR011877">
    <property type="entry name" value="Ribokinase"/>
</dbReference>
<dbReference type="InterPro" id="IPR029056">
    <property type="entry name" value="Ribokinase-like"/>
</dbReference>
<dbReference type="NCBIfam" id="TIGR02152">
    <property type="entry name" value="D_ribokin_bact"/>
    <property type="match status" value="1"/>
</dbReference>
<dbReference type="PANTHER" id="PTHR10584:SF166">
    <property type="entry name" value="RIBOKINASE"/>
    <property type="match status" value="1"/>
</dbReference>
<dbReference type="PANTHER" id="PTHR10584">
    <property type="entry name" value="SUGAR KINASE"/>
    <property type="match status" value="1"/>
</dbReference>
<dbReference type="Pfam" id="PF00294">
    <property type="entry name" value="PfkB"/>
    <property type="match status" value="1"/>
</dbReference>
<dbReference type="PRINTS" id="PR00990">
    <property type="entry name" value="RIBOKINASE"/>
</dbReference>
<dbReference type="SUPFAM" id="SSF53613">
    <property type="entry name" value="Ribokinase-like"/>
    <property type="match status" value="1"/>
</dbReference>
<dbReference type="PROSITE" id="PS00584">
    <property type="entry name" value="PFKB_KINASES_2"/>
    <property type="match status" value="1"/>
</dbReference>
<proteinExistence type="evidence at protein level"/>
<keyword id="KW-0002">3D-structure</keyword>
<keyword id="KW-0067">ATP-binding</keyword>
<keyword id="KW-0119">Carbohydrate metabolism</keyword>
<keyword id="KW-0963">Cytoplasm</keyword>
<keyword id="KW-0418">Kinase</keyword>
<keyword id="KW-0460">Magnesium</keyword>
<keyword id="KW-0479">Metal-binding</keyword>
<keyword id="KW-0547">Nucleotide-binding</keyword>
<keyword id="KW-0630">Potassium</keyword>
<keyword id="KW-0808">Transferase</keyword>
<sequence length="304" mass="32449">MTNKVVILGSTNVDQFLTVERYAQPGETLHVEEAQKAFGGGKGANQAIATARMQADTTFITKIGTDGVADFILEDFKVAHIDTSYIIKTAEAKTGQAFITVNAEGQNTIYVYGGANMTMTPEDVINAKDAIINADFVVAQLEVPIPAIISAFEIAKAHGVTTVLNPAPAKALPNELLSLIDIIVPNETEAELLSGIKVTNEQSMKDNANYFLSIGIKTVLITLGKQGTYFATKNQSQHIEAYKVNAIDTTAAGDTFIGAFVSRLNKSQDNLADAIDFGNKASSLTVQKHGAQASIPLLEEVNQV</sequence>
<protein>
    <recommendedName>
        <fullName evidence="1">Ribokinase</fullName>
        <shortName evidence="1">RK</shortName>
        <ecNumber evidence="1 2">2.7.1.15</ecNumber>
    </recommendedName>
</protein>
<evidence type="ECO:0000255" key="1">
    <source>
        <dbReference type="HAMAP-Rule" id="MF_01987"/>
    </source>
</evidence>
<evidence type="ECO:0000269" key="2">
    <source>
    </source>
</evidence>
<evidence type="ECO:0007744" key="3">
    <source>
        <dbReference type="PDB" id="3RY7"/>
    </source>
</evidence>
<evidence type="ECO:0007829" key="4">
    <source>
        <dbReference type="PDB" id="3RY7"/>
    </source>
</evidence>
<feature type="chain" id="PRO_0000447879" description="Ribokinase">
    <location>
        <begin position="1"/>
        <end position="304"/>
    </location>
</feature>
<feature type="active site" description="Proton acceptor" evidence="1">
    <location>
        <position position="254"/>
    </location>
</feature>
<feature type="binding site" evidence="1">
    <location>
        <begin position="12"/>
        <end position="14"/>
    </location>
    <ligand>
        <name>substrate</name>
    </ligand>
</feature>
<feature type="binding site" evidence="1">
    <location>
        <begin position="41"/>
        <end position="45"/>
    </location>
    <ligand>
        <name>substrate</name>
    </ligand>
</feature>
<feature type="binding site" evidence="1">
    <location>
        <position position="142"/>
    </location>
    <ligand>
        <name>substrate</name>
    </ligand>
</feature>
<feature type="binding site" evidence="1">
    <location>
        <position position="186"/>
    </location>
    <ligand>
        <name>ATP</name>
        <dbReference type="ChEBI" id="CHEBI:30616"/>
    </ligand>
</feature>
<feature type="binding site" evidence="1">
    <location>
        <begin position="222"/>
        <end position="227"/>
    </location>
    <ligand>
        <name>ATP</name>
        <dbReference type="ChEBI" id="CHEBI:30616"/>
    </ligand>
</feature>
<feature type="binding site" evidence="1">
    <location>
        <position position="248"/>
    </location>
    <ligand>
        <name>K(+)</name>
        <dbReference type="ChEBI" id="CHEBI:29103"/>
    </ligand>
</feature>
<feature type="binding site" evidence="1">
    <location>
        <position position="250"/>
    </location>
    <ligand>
        <name>K(+)</name>
        <dbReference type="ChEBI" id="CHEBI:29103"/>
    </ligand>
</feature>
<feature type="binding site" evidence="1">
    <location>
        <begin position="253"/>
        <end position="254"/>
    </location>
    <ligand>
        <name>ATP</name>
        <dbReference type="ChEBI" id="CHEBI:30616"/>
    </ligand>
</feature>
<feature type="binding site" evidence="1">
    <location>
        <position position="254"/>
    </location>
    <ligand>
        <name>substrate</name>
    </ligand>
</feature>
<feature type="binding site" evidence="1">
    <location>
        <position position="279"/>
    </location>
    <ligand>
        <name>ATP</name>
        <dbReference type="ChEBI" id="CHEBI:30616"/>
    </ligand>
</feature>
<feature type="binding site" evidence="1">
    <location>
        <position position="285"/>
    </location>
    <ligand>
        <name>K(+)</name>
        <dbReference type="ChEBI" id="CHEBI:29103"/>
    </ligand>
</feature>
<feature type="binding site" evidence="1">
    <location>
        <position position="288"/>
    </location>
    <ligand>
        <name>K(+)</name>
        <dbReference type="ChEBI" id="CHEBI:29103"/>
    </ligand>
</feature>
<feature type="binding site" evidence="1">
    <location>
        <position position="290"/>
    </location>
    <ligand>
        <name>K(+)</name>
        <dbReference type="ChEBI" id="CHEBI:29103"/>
    </ligand>
</feature>
<feature type="binding site" evidence="1">
    <location>
        <position position="294"/>
    </location>
    <ligand>
        <name>K(+)</name>
        <dbReference type="ChEBI" id="CHEBI:29103"/>
    </ligand>
</feature>
<feature type="strand" evidence="4">
    <location>
        <begin position="4"/>
        <end position="8"/>
    </location>
</feature>
<feature type="strand" evidence="4">
    <location>
        <begin position="12"/>
        <end position="18"/>
    </location>
</feature>
<feature type="strand" evidence="4">
    <location>
        <begin position="36"/>
        <end position="40"/>
    </location>
</feature>
<feature type="helix" evidence="4">
    <location>
        <begin position="42"/>
        <end position="52"/>
    </location>
</feature>
<feature type="strand" evidence="4">
    <location>
        <begin position="56"/>
        <end position="60"/>
    </location>
</feature>
<feature type="strand" evidence="4">
    <location>
        <begin position="62"/>
        <end position="66"/>
    </location>
</feature>
<feature type="helix" evidence="4">
    <location>
        <begin position="70"/>
        <end position="78"/>
    </location>
</feature>
<feature type="strand" evidence="4">
    <location>
        <begin position="87"/>
        <end position="92"/>
    </location>
</feature>
<feature type="strand" evidence="4">
    <location>
        <begin position="95"/>
        <end position="101"/>
    </location>
</feature>
<feature type="strand" evidence="4">
    <location>
        <begin position="107"/>
        <end position="112"/>
    </location>
</feature>
<feature type="helix" evidence="4">
    <location>
        <begin position="114"/>
        <end position="118"/>
    </location>
</feature>
<feature type="helix" evidence="4">
    <location>
        <begin position="121"/>
        <end position="125"/>
    </location>
</feature>
<feature type="helix" evidence="4">
    <location>
        <begin position="128"/>
        <end position="132"/>
    </location>
</feature>
<feature type="strand" evidence="4">
    <location>
        <begin position="135"/>
        <end position="140"/>
    </location>
</feature>
<feature type="helix" evidence="4">
    <location>
        <begin position="145"/>
        <end position="157"/>
    </location>
</feature>
<feature type="strand" evidence="4">
    <location>
        <begin position="161"/>
        <end position="165"/>
    </location>
</feature>
<feature type="helix" evidence="4">
    <location>
        <begin position="174"/>
        <end position="177"/>
    </location>
</feature>
<feature type="strand" evidence="4">
    <location>
        <begin position="181"/>
        <end position="183"/>
    </location>
</feature>
<feature type="helix" evidence="4">
    <location>
        <begin position="187"/>
        <end position="194"/>
    </location>
</feature>
<feature type="helix" evidence="4">
    <location>
        <begin position="201"/>
        <end position="213"/>
    </location>
</feature>
<feature type="strand" evidence="4">
    <location>
        <begin position="218"/>
        <end position="222"/>
    </location>
</feature>
<feature type="helix" evidence="4">
    <location>
        <begin position="224"/>
        <end position="226"/>
    </location>
</feature>
<feature type="strand" evidence="4">
    <location>
        <begin position="228"/>
        <end position="231"/>
    </location>
</feature>
<feature type="strand" evidence="4">
    <location>
        <begin position="236"/>
        <end position="239"/>
    </location>
</feature>
<feature type="helix" evidence="4">
    <location>
        <begin position="252"/>
        <end position="263"/>
    </location>
</feature>
<feature type="helix" evidence="4">
    <location>
        <begin position="271"/>
        <end position="283"/>
    </location>
</feature>
<feature type="helix" evidence="4">
    <location>
        <begin position="292"/>
        <end position="294"/>
    </location>
</feature>
<feature type="helix" evidence="4">
    <location>
        <begin position="298"/>
        <end position="302"/>
    </location>
</feature>
<reference key="1">
    <citation type="journal article" date="2005" name="J. Bacteriol.">
        <title>Insights on evolution of virulence and resistance from the complete genome analysis of an early methicillin-resistant Staphylococcus aureus strain and a biofilm-producing methicillin-resistant Staphylococcus epidermidis strain.</title>
        <authorList>
            <person name="Gill S.R."/>
            <person name="Fouts D.E."/>
            <person name="Archer G.L."/>
            <person name="Mongodin E.F."/>
            <person name="DeBoy R.T."/>
            <person name="Ravel J."/>
            <person name="Paulsen I.T."/>
            <person name="Kolonay J.F."/>
            <person name="Brinkac L.M."/>
            <person name="Beanan M.J."/>
            <person name="Dodson R.J."/>
            <person name="Daugherty S.C."/>
            <person name="Madupu R."/>
            <person name="Angiuoli S.V."/>
            <person name="Durkin A.S."/>
            <person name="Haft D.H."/>
            <person name="Vamathevan J.J."/>
            <person name="Khouri H."/>
            <person name="Utterback T.R."/>
            <person name="Lee C."/>
            <person name="Dimitrov G."/>
            <person name="Jiang L."/>
            <person name="Qin H."/>
            <person name="Weidman J."/>
            <person name="Tran K."/>
            <person name="Kang K.H."/>
            <person name="Hance I.R."/>
            <person name="Nelson K.E."/>
            <person name="Fraser C.M."/>
        </authorList>
    </citation>
    <scope>NUCLEOTIDE SEQUENCE [LARGE SCALE GENOMIC DNA]</scope>
    <source>
        <strain>COL</strain>
    </source>
</reference>
<reference evidence="3" key="2">
    <citation type="journal article" date="2012" name="J. Struct. Biol.">
        <title>Crystal structure of Sa239 reveals the structural basis for the activation of ribokinase by monovalent cations.</title>
        <authorList>
            <person name="Li J."/>
            <person name="Wang C."/>
            <person name="Wu Y."/>
            <person name="Wu M."/>
            <person name="Wang L."/>
            <person name="Wang Y."/>
            <person name="Zang J."/>
        </authorList>
    </citation>
    <scope>X-RAY CRYSTALLOGRAPHY (2.15 ANGSTROMS)</scope>
    <scope>FUNCTION</scope>
    <scope>SUBUNIT</scope>
    <scope>CATALYTIC ACTIVITY</scope>
    <scope>BIOPHYSICOCHEMICAL PROPERTIES</scope>
    <scope>ACTIVITY REGULATION</scope>
</reference>
<name>RBSK_STAAC</name>
<organism>
    <name type="scientific">Staphylococcus aureus (strain COL)</name>
    <dbReference type="NCBI Taxonomy" id="93062"/>
    <lineage>
        <taxon>Bacteria</taxon>
        <taxon>Bacillati</taxon>
        <taxon>Bacillota</taxon>
        <taxon>Bacilli</taxon>
        <taxon>Bacillales</taxon>
        <taxon>Staphylococcaceae</taxon>
        <taxon>Staphylococcus</taxon>
    </lineage>
</organism>
<accession>A0A0H2WZY4</accession>
<gene>
    <name evidence="1" type="primary">rbsK</name>
    <name type="ordered locus">SACOL0253</name>
</gene>